<sequence length="266" mass="30049">MTCIFIKNINEINKMRLVGKLVADVLDMIKEYIVPGITTEELNNICHNYITYKQHAKPACLGYQGFPKSICTSINDIVCHGIPNKNSILKNGDIINIDVAILKDKYYSDASKMFFVGKPTELGKKLCYVAKKSLYLALYTIRPGINLQKLGKVIQNYVKKQNFSIVKEYCGHGIGRSFHEPPQILHHNYYKSNTTILQSGMTFTVEPMINSGSCEVQCTNDGWTVKTKDKSLSAQYEHTILVNEEGCEILTLQKGEQISRILKNLT</sequence>
<evidence type="ECO:0000255" key="1">
    <source>
        <dbReference type="HAMAP-Rule" id="MF_01974"/>
    </source>
</evidence>
<gene>
    <name evidence="1" type="primary">map</name>
    <name type="ordered locus">bbp_212</name>
</gene>
<accession>Q89AP3</accession>
<reference key="1">
    <citation type="journal article" date="2003" name="Proc. Natl. Acad. Sci. U.S.A.">
        <title>Reductive genome evolution in Buchnera aphidicola.</title>
        <authorList>
            <person name="van Ham R.C.H.J."/>
            <person name="Kamerbeek J."/>
            <person name="Palacios C."/>
            <person name="Rausell C."/>
            <person name="Abascal F."/>
            <person name="Bastolla U."/>
            <person name="Fernandez J.M."/>
            <person name="Jimenez L."/>
            <person name="Postigo M."/>
            <person name="Silva F.J."/>
            <person name="Tamames J."/>
            <person name="Viguera E."/>
            <person name="Latorre A."/>
            <person name="Valencia A."/>
            <person name="Moran F."/>
            <person name="Moya A."/>
        </authorList>
    </citation>
    <scope>NUCLEOTIDE SEQUENCE [LARGE SCALE GENOMIC DNA]</scope>
    <source>
        <strain>Bp</strain>
    </source>
</reference>
<organism>
    <name type="scientific">Buchnera aphidicola subsp. Baizongia pistaciae (strain Bp)</name>
    <dbReference type="NCBI Taxonomy" id="224915"/>
    <lineage>
        <taxon>Bacteria</taxon>
        <taxon>Pseudomonadati</taxon>
        <taxon>Pseudomonadota</taxon>
        <taxon>Gammaproteobacteria</taxon>
        <taxon>Enterobacterales</taxon>
        <taxon>Erwiniaceae</taxon>
        <taxon>Buchnera</taxon>
    </lineage>
</organism>
<protein>
    <recommendedName>
        <fullName evidence="1">Methionine aminopeptidase</fullName>
        <shortName evidence="1">MAP</shortName>
        <shortName evidence="1">MetAP</shortName>
        <ecNumber evidence="1">3.4.11.18</ecNumber>
    </recommendedName>
    <alternativeName>
        <fullName evidence="1">Peptidase M</fullName>
    </alternativeName>
</protein>
<proteinExistence type="inferred from homology"/>
<dbReference type="EC" id="3.4.11.18" evidence="1"/>
<dbReference type="EMBL" id="AE016826">
    <property type="protein sequence ID" value="AAO26944.1"/>
    <property type="molecule type" value="Genomic_DNA"/>
</dbReference>
<dbReference type="RefSeq" id="WP_011091345.1">
    <property type="nucleotide sequence ID" value="NC_004545.1"/>
</dbReference>
<dbReference type="SMR" id="Q89AP3"/>
<dbReference type="STRING" id="224915.bbp_212"/>
<dbReference type="MEROPS" id="M24.001"/>
<dbReference type="KEGG" id="bab:bbp_212"/>
<dbReference type="eggNOG" id="COG0024">
    <property type="taxonomic scope" value="Bacteria"/>
</dbReference>
<dbReference type="HOGENOM" id="CLU_015857_0_0_6"/>
<dbReference type="OrthoDB" id="9802055at2"/>
<dbReference type="Proteomes" id="UP000000601">
    <property type="component" value="Chromosome"/>
</dbReference>
<dbReference type="GO" id="GO:0005829">
    <property type="term" value="C:cytosol"/>
    <property type="evidence" value="ECO:0007669"/>
    <property type="project" value="TreeGrafter"/>
</dbReference>
<dbReference type="GO" id="GO:0004239">
    <property type="term" value="F:initiator methionyl aminopeptidase activity"/>
    <property type="evidence" value="ECO:0007669"/>
    <property type="project" value="UniProtKB-UniRule"/>
</dbReference>
<dbReference type="GO" id="GO:0046872">
    <property type="term" value="F:metal ion binding"/>
    <property type="evidence" value="ECO:0007669"/>
    <property type="project" value="UniProtKB-UniRule"/>
</dbReference>
<dbReference type="GO" id="GO:0070006">
    <property type="term" value="F:metalloaminopeptidase activity"/>
    <property type="evidence" value="ECO:0007669"/>
    <property type="project" value="UniProtKB-UniRule"/>
</dbReference>
<dbReference type="GO" id="GO:0006508">
    <property type="term" value="P:proteolysis"/>
    <property type="evidence" value="ECO:0007669"/>
    <property type="project" value="UniProtKB-KW"/>
</dbReference>
<dbReference type="CDD" id="cd01086">
    <property type="entry name" value="MetAP1"/>
    <property type="match status" value="1"/>
</dbReference>
<dbReference type="Gene3D" id="3.90.230.10">
    <property type="entry name" value="Creatinase/methionine aminopeptidase superfamily"/>
    <property type="match status" value="1"/>
</dbReference>
<dbReference type="HAMAP" id="MF_01974">
    <property type="entry name" value="MetAP_1"/>
    <property type="match status" value="1"/>
</dbReference>
<dbReference type="InterPro" id="IPR036005">
    <property type="entry name" value="Creatinase/aminopeptidase-like"/>
</dbReference>
<dbReference type="InterPro" id="IPR000994">
    <property type="entry name" value="Pept_M24"/>
</dbReference>
<dbReference type="InterPro" id="IPR001714">
    <property type="entry name" value="Pept_M24_MAP"/>
</dbReference>
<dbReference type="InterPro" id="IPR002467">
    <property type="entry name" value="Pept_M24A_MAP1"/>
</dbReference>
<dbReference type="NCBIfam" id="TIGR00500">
    <property type="entry name" value="met_pdase_I"/>
    <property type="match status" value="1"/>
</dbReference>
<dbReference type="PANTHER" id="PTHR43330">
    <property type="entry name" value="METHIONINE AMINOPEPTIDASE"/>
    <property type="match status" value="1"/>
</dbReference>
<dbReference type="PANTHER" id="PTHR43330:SF27">
    <property type="entry name" value="METHIONINE AMINOPEPTIDASE"/>
    <property type="match status" value="1"/>
</dbReference>
<dbReference type="Pfam" id="PF00557">
    <property type="entry name" value="Peptidase_M24"/>
    <property type="match status" value="1"/>
</dbReference>
<dbReference type="PRINTS" id="PR00599">
    <property type="entry name" value="MAPEPTIDASE"/>
</dbReference>
<dbReference type="SUPFAM" id="SSF55920">
    <property type="entry name" value="Creatinase/aminopeptidase"/>
    <property type="match status" value="1"/>
</dbReference>
<dbReference type="PROSITE" id="PS00680">
    <property type="entry name" value="MAP_1"/>
    <property type="match status" value="1"/>
</dbReference>
<keyword id="KW-0031">Aminopeptidase</keyword>
<keyword id="KW-0378">Hydrolase</keyword>
<keyword id="KW-0479">Metal-binding</keyword>
<keyword id="KW-0645">Protease</keyword>
<keyword id="KW-1185">Reference proteome</keyword>
<feature type="chain" id="PRO_0000148931" description="Methionine aminopeptidase">
    <location>
        <begin position="1"/>
        <end position="266"/>
    </location>
</feature>
<feature type="binding site" evidence="1">
    <location>
        <position position="80"/>
    </location>
    <ligand>
        <name>substrate</name>
    </ligand>
</feature>
<feature type="binding site" evidence="1">
    <location>
        <position position="98"/>
    </location>
    <ligand>
        <name>a divalent metal cation</name>
        <dbReference type="ChEBI" id="CHEBI:60240"/>
        <label>1</label>
    </ligand>
</feature>
<feature type="binding site" evidence="1">
    <location>
        <position position="109"/>
    </location>
    <ligand>
        <name>a divalent metal cation</name>
        <dbReference type="ChEBI" id="CHEBI:60240"/>
        <label>1</label>
    </ligand>
</feature>
<feature type="binding site" evidence="1">
    <location>
        <position position="109"/>
    </location>
    <ligand>
        <name>a divalent metal cation</name>
        <dbReference type="ChEBI" id="CHEBI:60240"/>
        <label>2</label>
        <note>catalytic</note>
    </ligand>
</feature>
<feature type="binding site" evidence="1">
    <location>
        <position position="172"/>
    </location>
    <ligand>
        <name>a divalent metal cation</name>
        <dbReference type="ChEBI" id="CHEBI:60240"/>
        <label>2</label>
        <note>catalytic</note>
    </ligand>
</feature>
<feature type="binding site" evidence="1">
    <location>
        <position position="179"/>
    </location>
    <ligand>
        <name>substrate</name>
    </ligand>
</feature>
<feature type="binding site" evidence="1">
    <location>
        <position position="206"/>
    </location>
    <ligand>
        <name>a divalent metal cation</name>
        <dbReference type="ChEBI" id="CHEBI:60240"/>
        <label>2</label>
        <note>catalytic</note>
    </ligand>
</feature>
<feature type="binding site" evidence="1">
    <location>
        <position position="237"/>
    </location>
    <ligand>
        <name>a divalent metal cation</name>
        <dbReference type="ChEBI" id="CHEBI:60240"/>
        <label>1</label>
    </ligand>
</feature>
<feature type="binding site" evidence="1">
    <location>
        <position position="237"/>
    </location>
    <ligand>
        <name>a divalent metal cation</name>
        <dbReference type="ChEBI" id="CHEBI:60240"/>
        <label>2</label>
        <note>catalytic</note>
    </ligand>
</feature>
<comment type="function">
    <text evidence="1">Removes the N-terminal methionine from nascent proteins. The N-terminal methionine is often cleaved when the second residue in the primary sequence is small and uncharged (Met-Ala-, Cys, Gly, Pro, Ser, Thr, or Val). Requires deformylation of the N(alpha)-formylated initiator methionine before it can be hydrolyzed.</text>
</comment>
<comment type="catalytic activity">
    <reaction evidence="1">
        <text>Release of N-terminal amino acids, preferentially methionine, from peptides and arylamides.</text>
        <dbReference type="EC" id="3.4.11.18"/>
    </reaction>
</comment>
<comment type="cofactor">
    <cofactor evidence="1">
        <name>Co(2+)</name>
        <dbReference type="ChEBI" id="CHEBI:48828"/>
    </cofactor>
    <cofactor evidence="1">
        <name>Zn(2+)</name>
        <dbReference type="ChEBI" id="CHEBI:29105"/>
    </cofactor>
    <cofactor evidence="1">
        <name>Mn(2+)</name>
        <dbReference type="ChEBI" id="CHEBI:29035"/>
    </cofactor>
    <cofactor evidence="1">
        <name>Fe(2+)</name>
        <dbReference type="ChEBI" id="CHEBI:29033"/>
    </cofactor>
    <text evidence="1">Binds 2 divalent metal cations per subunit. Has a high-affinity and a low affinity metal-binding site. The true nature of the physiological cofactor is under debate. The enzyme is active with cobalt, zinc, manganese or divalent iron ions. Most likely, methionine aminopeptidases function as mononuclear Fe(2+)-metalloproteases under physiological conditions, and the catalytically relevant metal-binding site has been assigned to the histidine-containing high-affinity site.</text>
</comment>
<comment type="subunit">
    <text evidence="1">Monomer.</text>
</comment>
<comment type="similarity">
    <text evidence="1">Belongs to the peptidase M24A family. Methionine aminopeptidase type 1 subfamily.</text>
</comment>
<name>MAP1_BUCBP</name>